<name>RL2_BACC1</name>
<sequence length="276" mass="30253">MGIKKYNPTTNGRRNMTTNDFAEITTDRPEKSLLAPLSKKAGRNNQGKITVRHQGGGHKRQYRIIDFKRNKDGIPGRVATIEYDPNRSANIALINYVDGEKRYILAPKNLEVGMEIMSGAEADIKIGNALPLINIPVGTVVHNIELKPGRGGQLVRSAGTSAQVLGKEGKYVLVRLTSGEVRLVLSACRATVGQVGNESHELIKIGKAGRSRWLGKRPTVRGSVMNPVDHPHGGGEGRSPIGRKSPMSPWGKPTLGFKTRKKNKASDKFIVRRRKK</sequence>
<gene>
    <name evidence="1" type="primary">rplB</name>
    <name type="ordered locus">BCE_0113</name>
</gene>
<reference key="1">
    <citation type="journal article" date="2004" name="Nucleic Acids Res.">
        <title>The genome sequence of Bacillus cereus ATCC 10987 reveals metabolic adaptations and a large plasmid related to Bacillus anthracis pXO1.</title>
        <authorList>
            <person name="Rasko D.A."/>
            <person name="Ravel J."/>
            <person name="Oekstad O.A."/>
            <person name="Helgason E."/>
            <person name="Cer R.Z."/>
            <person name="Jiang L."/>
            <person name="Shores K.A."/>
            <person name="Fouts D.E."/>
            <person name="Tourasse N.J."/>
            <person name="Angiuoli S.V."/>
            <person name="Kolonay J.F."/>
            <person name="Nelson W.C."/>
            <person name="Kolstoe A.-B."/>
            <person name="Fraser C.M."/>
            <person name="Read T.D."/>
        </authorList>
    </citation>
    <scope>NUCLEOTIDE SEQUENCE [LARGE SCALE GENOMIC DNA]</scope>
    <source>
        <strain>ATCC 10987 / NRS 248</strain>
    </source>
</reference>
<dbReference type="EMBL" id="AE017194">
    <property type="protein sequence ID" value="AAS39049.1"/>
    <property type="molecule type" value="Genomic_DNA"/>
</dbReference>
<dbReference type="SMR" id="Q73F93"/>
<dbReference type="KEGG" id="bca:BCE_0113"/>
<dbReference type="HOGENOM" id="CLU_036235_2_1_9"/>
<dbReference type="Proteomes" id="UP000002527">
    <property type="component" value="Chromosome"/>
</dbReference>
<dbReference type="GO" id="GO:0015934">
    <property type="term" value="C:large ribosomal subunit"/>
    <property type="evidence" value="ECO:0007669"/>
    <property type="project" value="InterPro"/>
</dbReference>
<dbReference type="GO" id="GO:0019843">
    <property type="term" value="F:rRNA binding"/>
    <property type="evidence" value="ECO:0007669"/>
    <property type="project" value="UniProtKB-UniRule"/>
</dbReference>
<dbReference type="GO" id="GO:0003735">
    <property type="term" value="F:structural constituent of ribosome"/>
    <property type="evidence" value="ECO:0007669"/>
    <property type="project" value="InterPro"/>
</dbReference>
<dbReference type="GO" id="GO:0016740">
    <property type="term" value="F:transferase activity"/>
    <property type="evidence" value="ECO:0007669"/>
    <property type="project" value="InterPro"/>
</dbReference>
<dbReference type="GO" id="GO:0002181">
    <property type="term" value="P:cytoplasmic translation"/>
    <property type="evidence" value="ECO:0007669"/>
    <property type="project" value="TreeGrafter"/>
</dbReference>
<dbReference type="FunFam" id="2.30.30.30:FF:000001">
    <property type="entry name" value="50S ribosomal protein L2"/>
    <property type="match status" value="1"/>
</dbReference>
<dbReference type="FunFam" id="2.40.50.140:FF:000003">
    <property type="entry name" value="50S ribosomal protein L2"/>
    <property type="match status" value="1"/>
</dbReference>
<dbReference type="FunFam" id="4.10.950.10:FF:000001">
    <property type="entry name" value="50S ribosomal protein L2"/>
    <property type="match status" value="1"/>
</dbReference>
<dbReference type="Gene3D" id="2.30.30.30">
    <property type="match status" value="1"/>
</dbReference>
<dbReference type="Gene3D" id="2.40.50.140">
    <property type="entry name" value="Nucleic acid-binding proteins"/>
    <property type="match status" value="1"/>
</dbReference>
<dbReference type="Gene3D" id="4.10.950.10">
    <property type="entry name" value="Ribosomal protein L2, domain 3"/>
    <property type="match status" value="1"/>
</dbReference>
<dbReference type="HAMAP" id="MF_01320_B">
    <property type="entry name" value="Ribosomal_uL2_B"/>
    <property type="match status" value="1"/>
</dbReference>
<dbReference type="InterPro" id="IPR012340">
    <property type="entry name" value="NA-bd_OB-fold"/>
</dbReference>
<dbReference type="InterPro" id="IPR014722">
    <property type="entry name" value="Rib_uL2_dom2"/>
</dbReference>
<dbReference type="InterPro" id="IPR002171">
    <property type="entry name" value="Ribosomal_uL2"/>
</dbReference>
<dbReference type="InterPro" id="IPR005880">
    <property type="entry name" value="Ribosomal_uL2_bac/org-type"/>
</dbReference>
<dbReference type="InterPro" id="IPR022669">
    <property type="entry name" value="Ribosomal_uL2_C"/>
</dbReference>
<dbReference type="InterPro" id="IPR022671">
    <property type="entry name" value="Ribosomal_uL2_CS"/>
</dbReference>
<dbReference type="InterPro" id="IPR014726">
    <property type="entry name" value="Ribosomal_uL2_dom3"/>
</dbReference>
<dbReference type="InterPro" id="IPR022666">
    <property type="entry name" value="Ribosomal_uL2_RNA-bd_dom"/>
</dbReference>
<dbReference type="InterPro" id="IPR008991">
    <property type="entry name" value="Translation_prot_SH3-like_sf"/>
</dbReference>
<dbReference type="NCBIfam" id="TIGR01171">
    <property type="entry name" value="rplB_bact"/>
    <property type="match status" value="1"/>
</dbReference>
<dbReference type="PANTHER" id="PTHR13691:SF5">
    <property type="entry name" value="LARGE RIBOSOMAL SUBUNIT PROTEIN UL2M"/>
    <property type="match status" value="1"/>
</dbReference>
<dbReference type="PANTHER" id="PTHR13691">
    <property type="entry name" value="RIBOSOMAL PROTEIN L2"/>
    <property type="match status" value="1"/>
</dbReference>
<dbReference type="Pfam" id="PF00181">
    <property type="entry name" value="Ribosomal_L2"/>
    <property type="match status" value="1"/>
</dbReference>
<dbReference type="Pfam" id="PF03947">
    <property type="entry name" value="Ribosomal_L2_C"/>
    <property type="match status" value="1"/>
</dbReference>
<dbReference type="PIRSF" id="PIRSF002158">
    <property type="entry name" value="Ribosomal_L2"/>
    <property type="match status" value="1"/>
</dbReference>
<dbReference type="SMART" id="SM01383">
    <property type="entry name" value="Ribosomal_L2"/>
    <property type="match status" value="1"/>
</dbReference>
<dbReference type="SMART" id="SM01382">
    <property type="entry name" value="Ribosomal_L2_C"/>
    <property type="match status" value="1"/>
</dbReference>
<dbReference type="SUPFAM" id="SSF50249">
    <property type="entry name" value="Nucleic acid-binding proteins"/>
    <property type="match status" value="1"/>
</dbReference>
<dbReference type="SUPFAM" id="SSF50104">
    <property type="entry name" value="Translation proteins SH3-like domain"/>
    <property type="match status" value="1"/>
</dbReference>
<dbReference type="PROSITE" id="PS00467">
    <property type="entry name" value="RIBOSOMAL_L2"/>
    <property type="match status" value="1"/>
</dbReference>
<proteinExistence type="inferred from homology"/>
<evidence type="ECO:0000255" key="1">
    <source>
        <dbReference type="HAMAP-Rule" id="MF_01320"/>
    </source>
</evidence>
<evidence type="ECO:0000256" key="2">
    <source>
        <dbReference type="SAM" id="MobiDB-lite"/>
    </source>
</evidence>
<evidence type="ECO:0000305" key="3"/>
<comment type="function">
    <text evidence="1">One of the primary rRNA binding proteins. Required for association of the 30S and 50S subunits to form the 70S ribosome, for tRNA binding and peptide bond formation. It has been suggested to have peptidyltransferase activity; this is somewhat controversial. Makes several contacts with the 16S rRNA in the 70S ribosome.</text>
</comment>
<comment type="subunit">
    <text evidence="1">Part of the 50S ribosomal subunit. Forms a bridge to the 30S subunit in the 70S ribosome.</text>
</comment>
<comment type="similarity">
    <text evidence="1">Belongs to the universal ribosomal protein uL2 family.</text>
</comment>
<protein>
    <recommendedName>
        <fullName evidence="1">Large ribosomal subunit protein uL2</fullName>
    </recommendedName>
    <alternativeName>
        <fullName evidence="3">50S ribosomal protein L2</fullName>
    </alternativeName>
</protein>
<organism>
    <name type="scientific">Bacillus cereus (strain ATCC 10987 / NRS 248)</name>
    <dbReference type="NCBI Taxonomy" id="222523"/>
    <lineage>
        <taxon>Bacteria</taxon>
        <taxon>Bacillati</taxon>
        <taxon>Bacillota</taxon>
        <taxon>Bacilli</taxon>
        <taxon>Bacillales</taxon>
        <taxon>Bacillaceae</taxon>
        <taxon>Bacillus</taxon>
        <taxon>Bacillus cereus group</taxon>
    </lineage>
</organism>
<keyword id="KW-0687">Ribonucleoprotein</keyword>
<keyword id="KW-0689">Ribosomal protein</keyword>
<keyword id="KW-0694">RNA-binding</keyword>
<keyword id="KW-0699">rRNA-binding</keyword>
<accession>Q73F93</accession>
<feature type="chain" id="PRO_0000237149" description="Large ribosomal subunit protein uL2">
    <location>
        <begin position="1"/>
        <end position="276"/>
    </location>
</feature>
<feature type="region of interest" description="Disordered" evidence="2">
    <location>
        <begin position="1"/>
        <end position="20"/>
    </location>
</feature>
<feature type="region of interest" description="Disordered" evidence="2">
    <location>
        <begin position="219"/>
        <end position="276"/>
    </location>
</feature>
<feature type="compositionally biased region" description="Polar residues" evidence="2">
    <location>
        <begin position="7"/>
        <end position="20"/>
    </location>
</feature>